<proteinExistence type="evidence at protein level"/>
<keyword id="KW-0010">Activator</keyword>
<keyword id="KW-0238">DNA-binding</keyword>
<keyword id="KW-0244">Early protein</keyword>
<keyword id="KW-1035">Host cytoplasm</keyword>
<keyword id="KW-1048">Host nucleus</keyword>
<keyword id="KW-0945">Host-virus interaction</keyword>
<keyword id="KW-1090">Inhibition of host innate immune response by virus</keyword>
<keyword id="KW-1092">Inhibition of host IRF3 by virus</keyword>
<keyword id="KW-1113">Inhibition of host RLR pathway by virus</keyword>
<keyword id="KW-0479">Metal-binding</keyword>
<keyword id="KW-1119">Modulation of host cell apoptosis by virus</keyword>
<keyword id="KW-0553">Oncogene</keyword>
<keyword id="KW-0804">Transcription</keyword>
<keyword id="KW-0805">Transcription regulation</keyword>
<keyword id="KW-0899">Viral immunoevasion</keyword>
<keyword id="KW-0862">Zinc</keyword>
<keyword id="KW-0863">Zinc-finger</keyword>
<name>VE6_HPV68</name>
<comment type="function">
    <text evidence="1">Plays a major role in the induction and maintenance of cellular transformation. Acts mainly as an oncoprotein by stimulating the destruction of many host cell key regulatory proteins. E6 associates with host UBE3A/E6-AP ubiquitin-protein ligase, and inactivates tumor suppressors TP53 and TP73 by targeting them to the 26S proteasome for degradation. In turn, DNA damage and chromosomal instabilities increase and lead to cell proliferation and cancer development. The complex E6/E6AP targets several other substrates to degradation via the proteasome including host DLG1 or NFX1, a repressor of human telomerase reverse transcriptase (hTERT). The resulting increased expression of hTERT prevents the shortening of telomere length leading to cell immortalization. Other cellular targets including BAK1, Fas-associated death domain-containing protein (FADD) and procaspase 8, are degraded by E6/E6AP causing inhibition of apoptosis. E6 also inhibits immune response by interacting with host IRF3 and TYK2. These interactions prevent IRF3 transcriptional activities and inhibit TYK2-mediated JAK-STAT activation by interferon alpha resulting in inhibition of the interferon signaling pathway.</text>
</comment>
<comment type="subunit">
    <text evidence="1">Forms homodimers. Interacts with ubiquitin-protein ligase UBE3A/E6-AP and thus forms a complex with human TP53. Interacts with human NFX1 and MAGI3. Interacts with human IRF3; this interaction inhibits the establishment of antiviral state. Interacts with human TYK2; this interaction inhibits JAK-STAT activation by interferon alpha. Interacts with host DLG1; this interaction leads to the proteasomal degradation of DLG1.</text>
</comment>
<comment type="interaction">
    <interactant intactId="EBI-11793910">
        <id>P54667</id>
    </interactant>
    <interactant intactId="EBI-357481">
        <id>Q12959</id>
        <label>DLG1</label>
    </interactant>
    <organismsDiffer>true</organismsDiffer>
    <experiments>2</experiments>
</comment>
<comment type="subcellular location">
    <subcellularLocation>
        <location evidence="1">Host cytoplasm</location>
    </subcellularLocation>
    <subcellularLocation>
        <location evidence="1">Host nucleus</location>
    </subcellularLocation>
</comment>
<comment type="miscellaneous">
    <text evidence="1">Belongs to the high risk human alphapapillomavirus family. The cancer-causing human papillomavirus E6 protein has a unique carboxy terminal PDZ domain containing substrate.</text>
</comment>
<comment type="similarity">
    <text evidence="2">Belongs to the papillomaviridae E6 protein family.</text>
</comment>
<dbReference type="EMBL" id="X67160">
    <property type="protein sequence ID" value="CAA47632.1"/>
    <property type="molecule type" value="Genomic_DNA"/>
</dbReference>
<dbReference type="SMR" id="P54667"/>
<dbReference type="IntAct" id="P54667">
    <property type="interactions" value="1"/>
</dbReference>
<dbReference type="MINT" id="P54667"/>
<dbReference type="GO" id="GO:0030430">
    <property type="term" value="C:host cell cytoplasm"/>
    <property type="evidence" value="ECO:0007669"/>
    <property type="project" value="UniProtKB-SubCell"/>
</dbReference>
<dbReference type="GO" id="GO:0042025">
    <property type="term" value="C:host cell nucleus"/>
    <property type="evidence" value="ECO:0007669"/>
    <property type="project" value="UniProtKB-SubCell"/>
</dbReference>
<dbReference type="GO" id="GO:0003677">
    <property type="term" value="F:DNA binding"/>
    <property type="evidence" value="ECO:0007669"/>
    <property type="project" value="UniProtKB-UniRule"/>
</dbReference>
<dbReference type="GO" id="GO:0030165">
    <property type="term" value="F:PDZ domain binding"/>
    <property type="evidence" value="ECO:0007669"/>
    <property type="project" value="UniProtKB-UniRule"/>
</dbReference>
<dbReference type="GO" id="GO:0008270">
    <property type="term" value="F:zinc ion binding"/>
    <property type="evidence" value="ECO:0007669"/>
    <property type="project" value="UniProtKB-KW"/>
</dbReference>
<dbReference type="GO" id="GO:0006351">
    <property type="term" value="P:DNA-templated transcription"/>
    <property type="evidence" value="ECO:0007669"/>
    <property type="project" value="UniProtKB-UniRule"/>
</dbReference>
<dbReference type="GO" id="GO:0006355">
    <property type="term" value="P:regulation of DNA-templated transcription"/>
    <property type="evidence" value="ECO:0007669"/>
    <property type="project" value="UniProtKB-UniRule"/>
</dbReference>
<dbReference type="GO" id="GO:0052150">
    <property type="term" value="P:symbiont-mediated perturbation of host apoptosis"/>
    <property type="evidence" value="ECO:0007669"/>
    <property type="project" value="UniProtKB-KW"/>
</dbReference>
<dbReference type="GO" id="GO:0039648">
    <property type="term" value="P:symbiont-mediated perturbation of host ubiquitin-like protein modification"/>
    <property type="evidence" value="ECO:0007669"/>
    <property type="project" value="UniProtKB-UniRule"/>
</dbReference>
<dbReference type="GO" id="GO:0039548">
    <property type="term" value="P:symbiont-mediated suppression of host cytoplasmic pattern recognition receptor signaling pathway via inhibition of IRF3 activity"/>
    <property type="evidence" value="ECO:0007669"/>
    <property type="project" value="UniProtKB-UniRule"/>
</dbReference>
<dbReference type="GO" id="GO:0039502">
    <property type="term" value="P:symbiont-mediated suppression of host type I interferon-mediated signaling pathway"/>
    <property type="evidence" value="ECO:0007669"/>
    <property type="project" value="UniProtKB-UniRule"/>
</dbReference>
<dbReference type="FunFam" id="3.30.240.40:FF:000001">
    <property type="entry name" value="Protein E6"/>
    <property type="match status" value="1"/>
</dbReference>
<dbReference type="FunFam" id="3.30.240.40:FF:000002">
    <property type="entry name" value="Protein E6"/>
    <property type="match status" value="1"/>
</dbReference>
<dbReference type="Gene3D" id="3.30.240.40">
    <property type="entry name" value="E6 early regulatory protein"/>
    <property type="match status" value="2"/>
</dbReference>
<dbReference type="HAMAP" id="MF_04006">
    <property type="entry name" value="HPV_E6"/>
    <property type="match status" value="1"/>
</dbReference>
<dbReference type="InterPro" id="IPR001334">
    <property type="entry name" value="E6"/>
</dbReference>
<dbReference type="InterPro" id="IPR038575">
    <property type="entry name" value="E6_sf"/>
</dbReference>
<dbReference type="Pfam" id="PF00518">
    <property type="entry name" value="E6"/>
    <property type="match status" value="1"/>
</dbReference>
<dbReference type="SUPFAM" id="SSF161229">
    <property type="entry name" value="E6 C-terminal domain-like"/>
    <property type="match status" value="2"/>
</dbReference>
<accession>P54667</accession>
<feature type="chain" id="PRO_0000133380" description="Protein E6">
    <location>
        <begin position="1"/>
        <end position="158"/>
    </location>
</feature>
<feature type="zinc finger region" evidence="1">
    <location>
        <begin position="32"/>
        <end position="68"/>
    </location>
</feature>
<feature type="zinc finger region" evidence="1">
    <location>
        <begin position="105"/>
        <end position="141"/>
    </location>
</feature>
<feature type="short sequence motif" description="PDZ-binding domain" evidence="1">
    <location>
        <begin position="156"/>
        <end position="158"/>
    </location>
</feature>
<sequence length="158" mass="18796">MALFHNPEERPYKLPDLCRTLDTTLHDVTIDCVYCRRQLQRTEVYEFAFSDLCVVYRDGVPFAACQSCIKFYAKIRELRYYSESVYATTLETITNTKLYNLLIRCMSCLKPLCPAEKLRHLTTKRRLHKIAGNFTGQCRHCWTSKREDRRRIRQETQV</sequence>
<organismHost>
    <name type="scientific">Homo sapiens</name>
    <name type="common">Human</name>
    <dbReference type="NCBI Taxonomy" id="9606"/>
</organismHost>
<protein>
    <recommendedName>
        <fullName evidence="1">Protein E6</fullName>
    </recommendedName>
</protein>
<reference key="1">
    <citation type="journal article" date="1996" name="J. Clin. Microbiol.">
        <title>Two novel genital human papillomavirus (HPV) types, HPV68 and HPV70, related to the potentially oncogenic HPV39.</title>
        <authorList>
            <person name="Longuet M."/>
            <person name="Beaudenon S."/>
            <person name="Orth G."/>
        </authorList>
    </citation>
    <scope>NUCLEOTIDE SEQUENCE [GENOMIC DNA]</scope>
</reference>
<organism>
    <name type="scientific">Human papillomavirus 68</name>
    <dbReference type="NCBI Taxonomy" id="45240"/>
    <lineage>
        <taxon>Viruses</taxon>
        <taxon>Monodnaviria</taxon>
        <taxon>Shotokuvirae</taxon>
        <taxon>Cossaviricota</taxon>
        <taxon>Papovaviricetes</taxon>
        <taxon>Zurhausenvirales</taxon>
        <taxon>Papillomaviridae</taxon>
        <taxon>Firstpapillomavirinae</taxon>
        <taxon>Alphapapillomavirus</taxon>
        <taxon>Alphapapillomavirus 7</taxon>
    </lineage>
</organism>
<evidence type="ECO:0000255" key="1">
    <source>
        <dbReference type="HAMAP-Rule" id="MF_04006"/>
    </source>
</evidence>
<evidence type="ECO:0000305" key="2"/>
<gene>
    <name evidence="1" type="primary">E6</name>
</gene>